<keyword id="KW-0067">ATP-binding</keyword>
<keyword id="KW-0319">Glycerol metabolism</keyword>
<keyword id="KW-0418">Kinase</keyword>
<keyword id="KW-0547">Nucleotide-binding</keyword>
<keyword id="KW-0597">Phosphoprotein</keyword>
<keyword id="KW-0808">Transferase</keyword>
<gene>
    <name evidence="1" type="primary">glpK</name>
    <name type="ordered locus">MGAS2096_Spy1404</name>
</gene>
<comment type="function">
    <text evidence="1">Key enzyme in the regulation of glycerol uptake and metabolism. Catalyzes the phosphorylation of glycerol to yield sn-glycerol 3-phosphate.</text>
</comment>
<comment type="catalytic activity">
    <reaction evidence="1">
        <text>glycerol + ATP = sn-glycerol 3-phosphate + ADP + H(+)</text>
        <dbReference type="Rhea" id="RHEA:21644"/>
        <dbReference type="ChEBI" id="CHEBI:15378"/>
        <dbReference type="ChEBI" id="CHEBI:17754"/>
        <dbReference type="ChEBI" id="CHEBI:30616"/>
        <dbReference type="ChEBI" id="CHEBI:57597"/>
        <dbReference type="ChEBI" id="CHEBI:456216"/>
        <dbReference type="EC" id="2.7.1.30"/>
    </reaction>
</comment>
<comment type="activity regulation">
    <text evidence="1">Activated by phosphorylation and inhibited by fructose 1,6-bisphosphate (FBP).</text>
</comment>
<comment type="pathway">
    <text evidence="1">Polyol metabolism; glycerol degradation via glycerol kinase pathway; sn-glycerol 3-phosphate from glycerol: step 1/1.</text>
</comment>
<comment type="subunit">
    <text evidence="1">Homotetramer and homodimer (in equilibrium).</text>
</comment>
<comment type="PTM">
    <text evidence="1">The phosphoenolpyruvate-dependent sugar phosphotransferase system (PTS), including enzyme I, and histidine-containing protein (HPr) are required for the phosphorylation, which leads to the activation of the enzyme.</text>
</comment>
<comment type="similarity">
    <text evidence="1">Belongs to the FGGY kinase family.</text>
</comment>
<evidence type="ECO:0000255" key="1">
    <source>
        <dbReference type="HAMAP-Rule" id="MF_00186"/>
    </source>
</evidence>
<dbReference type="EC" id="2.7.1.30" evidence="1"/>
<dbReference type="EMBL" id="CP000261">
    <property type="protein sequence ID" value="ABF36456.1"/>
    <property type="molecule type" value="Genomic_DNA"/>
</dbReference>
<dbReference type="SMR" id="Q1JAF2"/>
<dbReference type="KEGG" id="spj:MGAS2096_Spy1404"/>
<dbReference type="HOGENOM" id="CLU_009281_2_3_9"/>
<dbReference type="UniPathway" id="UPA00618">
    <property type="reaction ID" value="UER00672"/>
</dbReference>
<dbReference type="GO" id="GO:0005829">
    <property type="term" value="C:cytosol"/>
    <property type="evidence" value="ECO:0007669"/>
    <property type="project" value="TreeGrafter"/>
</dbReference>
<dbReference type="GO" id="GO:0005524">
    <property type="term" value="F:ATP binding"/>
    <property type="evidence" value="ECO:0007669"/>
    <property type="project" value="UniProtKB-UniRule"/>
</dbReference>
<dbReference type="GO" id="GO:0004370">
    <property type="term" value="F:glycerol kinase activity"/>
    <property type="evidence" value="ECO:0000250"/>
    <property type="project" value="UniProtKB"/>
</dbReference>
<dbReference type="GO" id="GO:0019563">
    <property type="term" value="P:glycerol catabolic process"/>
    <property type="evidence" value="ECO:0007669"/>
    <property type="project" value="UniProtKB-UniRule"/>
</dbReference>
<dbReference type="GO" id="GO:0006071">
    <property type="term" value="P:glycerol metabolic process"/>
    <property type="evidence" value="ECO:0000250"/>
    <property type="project" value="UniProtKB"/>
</dbReference>
<dbReference type="GO" id="GO:0006072">
    <property type="term" value="P:glycerol-3-phosphate metabolic process"/>
    <property type="evidence" value="ECO:0007669"/>
    <property type="project" value="InterPro"/>
</dbReference>
<dbReference type="CDD" id="cd07786">
    <property type="entry name" value="FGGY_EcGK_like"/>
    <property type="match status" value="1"/>
</dbReference>
<dbReference type="FunFam" id="3.30.420.40:FF:000007">
    <property type="entry name" value="Glycerol kinase"/>
    <property type="match status" value="1"/>
</dbReference>
<dbReference type="FunFam" id="3.30.420.40:FF:000008">
    <property type="entry name" value="Glycerol kinase"/>
    <property type="match status" value="1"/>
</dbReference>
<dbReference type="Gene3D" id="3.30.420.40">
    <property type="match status" value="2"/>
</dbReference>
<dbReference type="HAMAP" id="MF_00186">
    <property type="entry name" value="Glycerol_kin"/>
    <property type="match status" value="1"/>
</dbReference>
<dbReference type="InterPro" id="IPR043129">
    <property type="entry name" value="ATPase_NBD"/>
</dbReference>
<dbReference type="InterPro" id="IPR000577">
    <property type="entry name" value="Carb_kinase_FGGY"/>
</dbReference>
<dbReference type="InterPro" id="IPR018483">
    <property type="entry name" value="Carb_kinase_FGGY_CS"/>
</dbReference>
<dbReference type="InterPro" id="IPR018485">
    <property type="entry name" value="FGGY_C"/>
</dbReference>
<dbReference type="InterPro" id="IPR018484">
    <property type="entry name" value="FGGY_N"/>
</dbReference>
<dbReference type="InterPro" id="IPR005999">
    <property type="entry name" value="Glycerol_kin"/>
</dbReference>
<dbReference type="NCBIfam" id="TIGR01311">
    <property type="entry name" value="glycerol_kin"/>
    <property type="match status" value="1"/>
</dbReference>
<dbReference type="NCBIfam" id="NF000756">
    <property type="entry name" value="PRK00047.1"/>
    <property type="match status" value="1"/>
</dbReference>
<dbReference type="PANTHER" id="PTHR10196:SF69">
    <property type="entry name" value="GLYCEROL KINASE"/>
    <property type="match status" value="1"/>
</dbReference>
<dbReference type="PANTHER" id="PTHR10196">
    <property type="entry name" value="SUGAR KINASE"/>
    <property type="match status" value="1"/>
</dbReference>
<dbReference type="Pfam" id="PF02782">
    <property type="entry name" value="FGGY_C"/>
    <property type="match status" value="1"/>
</dbReference>
<dbReference type="Pfam" id="PF00370">
    <property type="entry name" value="FGGY_N"/>
    <property type="match status" value="1"/>
</dbReference>
<dbReference type="PIRSF" id="PIRSF000538">
    <property type="entry name" value="GlpK"/>
    <property type="match status" value="1"/>
</dbReference>
<dbReference type="SUPFAM" id="SSF53067">
    <property type="entry name" value="Actin-like ATPase domain"/>
    <property type="match status" value="2"/>
</dbReference>
<dbReference type="PROSITE" id="PS00933">
    <property type="entry name" value="FGGY_KINASES_1"/>
    <property type="match status" value="1"/>
</dbReference>
<dbReference type="PROSITE" id="PS00445">
    <property type="entry name" value="FGGY_KINASES_2"/>
    <property type="match status" value="1"/>
</dbReference>
<name>GLPK_STRPB</name>
<protein>
    <recommendedName>
        <fullName evidence="1">Glycerol kinase</fullName>
        <ecNumber evidence="1">2.7.1.30</ecNumber>
    </recommendedName>
    <alternativeName>
        <fullName evidence="1">ATP:glycerol 3-phosphotransferase</fullName>
    </alternativeName>
    <alternativeName>
        <fullName evidence="1">Glycerokinase</fullName>
        <shortName evidence="1">GK</shortName>
    </alternativeName>
</protein>
<accession>Q1JAF2</accession>
<proteinExistence type="inferred from homology"/>
<organism>
    <name type="scientific">Streptococcus pyogenes serotype M12 (strain MGAS2096)</name>
    <dbReference type="NCBI Taxonomy" id="370553"/>
    <lineage>
        <taxon>Bacteria</taxon>
        <taxon>Bacillati</taxon>
        <taxon>Bacillota</taxon>
        <taxon>Bacilli</taxon>
        <taxon>Lactobacillales</taxon>
        <taxon>Streptococcaceae</taxon>
        <taxon>Streptococcus</taxon>
    </lineage>
</organism>
<feature type="chain" id="PRO_1000020799" description="Glycerol kinase">
    <location>
        <begin position="1"/>
        <end position="508"/>
    </location>
</feature>
<feature type="binding site" evidence="1">
    <location>
        <position position="14"/>
    </location>
    <ligand>
        <name>ADP</name>
        <dbReference type="ChEBI" id="CHEBI:456216"/>
    </ligand>
</feature>
<feature type="binding site" evidence="1">
    <location>
        <position position="14"/>
    </location>
    <ligand>
        <name>ATP</name>
        <dbReference type="ChEBI" id="CHEBI:30616"/>
    </ligand>
</feature>
<feature type="binding site" evidence="1">
    <location>
        <position position="14"/>
    </location>
    <ligand>
        <name>sn-glycerol 3-phosphate</name>
        <dbReference type="ChEBI" id="CHEBI:57597"/>
    </ligand>
</feature>
<feature type="binding site" evidence="1">
    <location>
        <position position="15"/>
    </location>
    <ligand>
        <name>ATP</name>
        <dbReference type="ChEBI" id="CHEBI:30616"/>
    </ligand>
</feature>
<feature type="binding site" evidence="1">
    <location>
        <position position="16"/>
    </location>
    <ligand>
        <name>ATP</name>
        <dbReference type="ChEBI" id="CHEBI:30616"/>
    </ligand>
</feature>
<feature type="binding site" evidence="1">
    <location>
        <position position="18"/>
    </location>
    <ligand>
        <name>ADP</name>
        <dbReference type="ChEBI" id="CHEBI:456216"/>
    </ligand>
</feature>
<feature type="binding site" evidence="1">
    <location>
        <position position="84"/>
    </location>
    <ligand>
        <name>glycerol</name>
        <dbReference type="ChEBI" id="CHEBI:17754"/>
    </ligand>
</feature>
<feature type="binding site" evidence="1">
    <location>
        <position position="84"/>
    </location>
    <ligand>
        <name>sn-glycerol 3-phosphate</name>
        <dbReference type="ChEBI" id="CHEBI:57597"/>
    </ligand>
</feature>
<feature type="binding site" evidence="1">
    <location>
        <position position="85"/>
    </location>
    <ligand>
        <name>glycerol</name>
        <dbReference type="ChEBI" id="CHEBI:17754"/>
    </ligand>
</feature>
<feature type="binding site" evidence="1">
    <location>
        <position position="85"/>
    </location>
    <ligand>
        <name>sn-glycerol 3-phosphate</name>
        <dbReference type="ChEBI" id="CHEBI:57597"/>
    </ligand>
</feature>
<feature type="binding site" evidence="1">
    <location>
        <position position="136"/>
    </location>
    <ligand>
        <name>glycerol</name>
        <dbReference type="ChEBI" id="CHEBI:17754"/>
    </ligand>
</feature>
<feature type="binding site" evidence="1">
    <location>
        <position position="136"/>
    </location>
    <ligand>
        <name>sn-glycerol 3-phosphate</name>
        <dbReference type="ChEBI" id="CHEBI:57597"/>
    </ligand>
</feature>
<feature type="binding site" evidence="1">
    <location>
        <position position="246"/>
    </location>
    <ligand>
        <name>glycerol</name>
        <dbReference type="ChEBI" id="CHEBI:17754"/>
    </ligand>
</feature>
<feature type="binding site" evidence="1">
    <location>
        <position position="246"/>
    </location>
    <ligand>
        <name>sn-glycerol 3-phosphate</name>
        <dbReference type="ChEBI" id="CHEBI:57597"/>
    </ligand>
</feature>
<feature type="binding site" evidence="1">
    <location>
        <position position="247"/>
    </location>
    <ligand>
        <name>glycerol</name>
        <dbReference type="ChEBI" id="CHEBI:17754"/>
    </ligand>
</feature>
<feature type="binding site" evidence="1">
    <location>
        <position position="268"/>
    </location>
    <ligand>
        <name>ADP</name>
        <dbReference type="ChEBI" id="CHEBI:456216"/>
    </ligand>
</feature>
<feature type="binding site" evidence="1">
    <location>
        <position position="268"/>
    </location>
    <ligand>
        <name>ATP</name>
        <dbReference type="ChEBI" id="CHEBI:30616"/>
    </ligand>
</feature>
<feature type="binding site" evidence="1">
    <location>
        <position position="311"/>
    </location>
    <ligand>
        <name>ADP</name>
        <dbReference type="ChEBI" id="CHEBI:456216"/>
    </ligand>
</feature>
<feature type="binding site" evidence="1">
    <location>
        <position position="311"/>
    </location>
    <ligand>
        <name>ATP</name>
        <dbReference type="ChEBI" id="CHEBI:30616"/>
    </ligand>
</feature>
<feature type="binding site" evidence="1">
    <location>
        <position position="315"/>
    </location>
    <ligand>
        <name>ATP</name>
        <dbReference type="ChEBI" id="CHEBI:30616"/>
    </ligand>
</feature>
<feature type="binding site" evidence="1">
    <location>
        <position position="412"/>
    </location>
    <ligand>
        <name>ADP</name>
        <dbReference type="ChEBI" id="CHEBI:456216"/>
    </ligand>
</feature>
<feature type="binding site" evidence="1">
    <location>
        <position position="412"/>
    </location>
    <ligand>
        <name>ATP</name>
        <dbReference type="ChEBI" id="CHEBI:30616"/>
    </ligand>
</feature>
<feature type="binding site" evidence="1">
    <location>
        <position position="416"/>
    </location>
    <ligand>
        <name>ADP</name>
        <dbReference type="ChEBI" id="CHEBI:456216"/>
    </ligand>
</feature>
<feature type="modified residue" description="Phosphohistidine; by HPr" evidence="1">
    <location>
        <position position="232"/>
    </location>
</feature>
<sequence length="508" mass="56053">MSQEKYIMAIDQGTTSSRAIIFNQKGEKVSSSQKEFPQIFPHAGWVEHNANQIWNSVQSVIAGAFIESSIKPSQIEAIGITNQRETTVVWDKKTGVPIYNAIVWQSRQTAPIAEQLKQDGHTKMIHEKTGLVIDAYFSATKIRWILDHVPGAQERAEKGELLFGTIDTWLVWKLTDGAVHVTDYSNAARTMLYNIKDLTWDDEILELLNIPKDMLPEVKSNSEIYGKTAAFHFYGGEVPISGMAGDQQAALFGQLAFEPGMVKNTYGTGSFIIMNTGDEMQLSSNNLLTTIGYGINGKVHYALEGSIFIAGSAIQWLRDGLKMIETSPESEQFALASTSDDEVYVVPAFTGLGAPYWDSNARGSVFGLTRGTSKEDFVKATLQSIAYQVRDVIDTMQVDSGIDIQQLRVDGGAAMNNMLMQFQADILGIDIARAKNLETTALGAAFLAGLAVGYWEDMDALKELNATGQLFKASMNESRKEKLYKGWKRAVKATQVFTQEEDADDDAK</sequence>
<reference key="1">
    <citation type="journal article" date="2006" name="Proc. Natl. Acad. Sci. U.S.A.">
        <title>Molecular genetic anatomy of inter- and intraserotype variation in the human bacterial pathogen group A Streptococcus.</title>
        <authorList>
            <person name="Beres S.B."/>
            <person name="Richter E.W."/>
            <person name="Nagiec M.J."/>
            <person name="Sumby P."/>
            <person name="Porcella S.F."/>
            <person name="DeLeo F.R."/>
            <person name="Musser J.M."/>
        </authorList>
    </citation>
    <scope>NUCLEOTIDE SEQUENCE [LARGE SCALE GENOMIC DNA]</scope>
    <source>
        <strain>MGAS2096</strain>
    </source>
</reference>